<reference key="1">
    <citation type="journal article" date="2015" name="Proc. Natl. Acad. Sci. U.S.A.">
        <title>Trichodesmium genome maintains abundant, widespread noncoding DNA in situ, despite oligotrophic lifestyle.</title>
        <authorList>
            <person name="Walworth N."/>
            <person name="Pfreundt U."/>
            <person name="Nelson W.C."/>
            <person name="Mincer T."/>
            <person name="Heidelberg J.F."/>
            <person name="Fu F."/>
            <person name="Waterbury J.B."/>
            <person name="Glavina del Rio T."/>
            <person name="Goodwin L."/>
            <person name="Kyrpides N.C."/>
            <person name="Land M.L."/>
            <person name="Woyke T."/>
            <person name="Hutchins D.A."/>
            <person name="Hess W.R."/>
            <person name="Webb E.A."/>
        </authorList>
    </citation>
    <scope>NUCLEOTIDE SEQUENCE [LARGE SCALE GENOMIC DNA]</scope>
    <source>
        <strain>IMS101</strain>
    </source>
</reference>
<keyword id="KW-0240">DNA-directed RNA polymerase</keyword>
<keyword id="KW-0479">Metal-binding</keyword>
<keyword id="KW-0548">Nucleotidyltransferase</keyword>
<keyword id="KW-0804">Transcription</keyword>
<keyword id="KW-0808">Transferase</keyword>
<keyword id="KW-0862">Zinc</keyword>
<comment type="function">
    <text evidence="1">DNA-dependent RNA polymerase catalyzes the transcription of DNA into RNA using the four ribonucleoside triphosphates as substrates.</text>
</comment>
<comment type="catalytic activity">
    <reaction evidence="1">
        <text>RNA(n) + a ribonucleoside 5'-triphosphate = RNA(n+1) + diphosphate</text>
        <dbReference type="Rhea" id="RHEA:21248"/>
        <dbReference type="Rhea" id="RHEA-COMP:14527"/>
        <dbReference type="Rhea" id="RHEA-COMP:17342"/>
        <dbReference type="ChEBI" id="CHEBI:33019"/>
        <dbReference type="ChEBI" id="CHEBI:61557"/>
        <dbReference type="ChEBI" id="CHEBI:140395"/>
        <dbReference type="EC" id="2.7.7.6"/>
    </reaction>
</comment>
<comment type="cofactor">
    <cofactor evidence="1">
        <name>Zn(2+)</name>
        <dbReference type="ChEBI" id="CHEBI:29105"/>
    </cofactor>
    <text evidence="1">Binds 1 Zn(2+) ion per subunit.</text>
</comment>
<comment type="subunit">
    <text evidence="1">In cyanobacteria the RNAP catalytic core is composed of 2 alpha, 1 beta, 1 beta', 1 gamma and 1 omega subunit. When a sigma factor is associated with the core the holoenzyme is formed, which can initiate transcription.</text>
</comment>
<comment type="similarity">
    <text evidence="1">Belongs to the RNA polymerase beta' chain family. RpoC2 subfamily.</text>
</comment>
<evidence type="ECO:0000255" key="1">
    <source>
        <dbReference type="HAMAP-Rule" id="MF_01324"/>
    </source>
</evidence>
<evidence type="ECO:0000256" key="2">
    <source>
        <dbReference type="SAM" id="MobiDB-lite"/>
    </source>
</evidence>
<proteinExistence type="inferred from homology"/>
<accession>Q110H3</accession>
<protein>
    <recommendedName>
        <fullName evidence="1">DNA-directed RNA polymerase subunit beta'</fullName>
        <shortName evidence="1">RNAP subunit beta'</shortName>
        <ecNumber evidence="1">2.7.7.6</ecNumber>
    </recommendedName>
    <alternativeName>
        <fullName evidence="1">RNA polymerase subunit beta'</fullName>
    </alternativeName>
    <alternativeName>
        <fullName evidence="1">Transcriptase subunit beta'</fullName>
    </alternativeName>
</protein>
<feature type="chain" id="PRO_0000353541" description="DNA-directed RNA polymerase subunit beta'">
    <location>
        <begin position="1"/>
        <end position="1415"/>
    </location>
</feature>
<feature type="region of interest" description="Disordered" evidence="2">
    <location>
        <begin position="1335"/>
        <end position="1390"/>
    </location>
</feature>
<feature type="compositionally biased region" description="Polar residues" evidence="2">
    <location>
        <begin position="1335"/>
        <end position="1351"/>
    </location>
</feature>
<feature type="binding site" evidence="1">
    <location>
        <position position="214"/>
    </location>
    <ligand>
        <name>Zn(2+)</name>
        <dbReference type="ChEBI" id="CHEBI:29105"/>
    </ligand>
</feature>
<feature type="binding site" evidence="1">
    <location>
        <position position="294"/>
    </location>
    <ligand>
        <name>Zn(2+)</name>
        <dbReference type="ChEBI" id="CHEBI:29105"/>
    </ligand>
</feature>
<feature type="binding site" evidence="1">
    <location>
        <position position="301"/>
    </location>
    <ligand>
        <name>Zn(2+)</name>
        <dbReference type="ChEBI" id="CHEBI:29105"/>
    </ligand>
</feature>
<feature type="binding site" evidence="1">
    <location>
        <position position="304"/>
    </location>
    <ligand>
        <name>Zn(2+)</name>
        <dbReference type="ChEBI" id="CHEBI:29105"/>
    </ligand>
</feature>
<name>RPOC2_TRIEI</name>
<sequence>MIFYNRVINKGQLKKLISWSFNNYGTAITAQMANKLKDLGFRYATKAGVSISVDDLQVPPSKRQLLDEAEQEIRNTTERYTKGKITEVERFQKVIDTWNSTSENLKNEVVRNFRSTDPLNSVYMMAFSGARGNISQVRQLVGMRGLMADPQGEIIDLPIKTNFREGLTVTEYIISSYGARKGLVDTALRTADSGYLTRRLVDVSQDVIVREADCGTKRGVMVTSMKDGDRVLIPVKDRLLGRVLADDVKDPKTGEIVTQGHIQAVKNQVLTEDLAKAIGKAGVENVFVRSPLTCESPRSVCQTCYGWSLAHGHMVDMGEAIGIIAAQSIGEPGTQLTMRTFHTGGVFTGEVARQFVASFGGVVKYPSNVRTRSFRTRHGDEAMIAENNFDMIILGVDGRKETIPIAQGSILMVQNNQQVSAGIVLAEVPKVGQVRKTTEKVTKEVASDLAGELKFAQLVQEEKVDKQGTTTRIAQRGGLIWILEGEVYNLPPGAEAMVKNGTRININSVLAETKLVTEHGGVIRISSSPLYSPEKQNETNVLAQATQESTIDELEASMTGTSAQLPINTEMPDNLPREIEVITASVRLDQAKVRLESISNREQYIIETQNDQRFALKVTPGSKVGNHEVIAELLDENYQTSTGGIIKYAGVEVLKRGKAKQGYEVVKGGTLLWIPEECHEVNKDISLLLVEDGQYVEAGTEIVKDIFCQSNGVTEVHQKNDILREVVIKPGKLHSGNYEIDLGDLTLMDGQIATPGEEVIPGLVTSELKYIEYIETPEGPGLLLRPVTEFHVPDEPGVPSQKSINSSIELRAVQRIPFKDGERVKSVEGIELLRTQLVLEIGEEAPQLAADIELLPDLEEEGIMRLQLVILESLVIRRDVVADTTQGSTSTRLLVKDGDVIEAGGVVSRTQILSKKSGEVRGIREGSEAIRRILIVREADLVKIPVNTLPSVVEGDLLVAGTEIAPGIVIPRSGLVSKVEETVLNDGSKGYQVILRKGRPYRVSTGAVLLTMDGDLVQRGDILVLLVFERTKTGDIIQGLPRIEELLEARKPKESCILVKYPGQAQVNVNDDNVEVSVVSSDGTITDYPLGHGQNVIVADGQNVNVGEALTDGPQNPHEILETFFNYYREHESAYEACLRSFEACQRFLVNQVQAVYQSQGIDISDKHIEVIVRQMTAKVRIDDGGDTTMLPGELIELRQVEQVNEAMSITGGATAQYTPMLLGITKASLNTDSFISAASFQETTRVLTEAAIEGKSDWLRGLKENVIIGRLIPAGTGFNAYEDALSAEINRLEQNWDDDLDIFEEGDLQSVVLDDQTARSLEFENSLNLSSANQNFVDSQGKPQSQSSFIDDSMSEFSPVKDKSGSVLDDSDFPPGNFDSDFPADNYDLEHEIDLEDDVYDGYDDFDENTPDLI</sequence>
<dbReference type="EC" id="2.7.7.6" evidence="1"/>
<dbReference type="EMBL" id="CP000393">
    <property type="protein sequence ID" value="ABG52101.1"/>
    <property type="molecule type" value="Genomic_DNA"/>
</dbReference>
<dbReference type="RefSeq" id="WP_011612459.1">
    <property type="nucleotide sequence ID" value="NC_008312.1"/>
</dbReference>
<dbReference type="SMR" id="Q110H3"/>
<dbReference type="STRING" id="203124.Tery_2937"/>
<dbReference type="KEGG" id="ter:Tery_2937"/>
<dbReference type="eggNOG" id="COG0086">
    <property type="taxonomic scope" value="Bacteria"/>
</dbReference>
<dbReference type="HOGENOM" id="CLU_000524_1_0_3"/>
<dbReference type="OrthoDB" id="9815296at2"/>
<dbReference type="GO" id="GO:0000428">
    <property type="term" value="C:DNA-directed RNA polymerase complex"/>
    <property type="evidence" value="ECO:0007669"/>
    <property type="project" value="UniProtKB-KW"/>
</dbReference>
<dbReference type="GO" id="GO:0003677">
    <property type="term" value="F:DNA binding"/>
    <property type="evidence" value="ECO:0007669"/>
    <property type="project" value="UniProtKB-UniRule"/>
</dbReference>
<dbReference type="GO" id="GO:0003899">
    <property type="term" value="F:DNA-directed RNA polymerase activity"/>
    <property type="evidence" value="ECO:0007669"/>
    <property type="project" value="UniProtKB-UniRule"/>
</dbReference>
<dbReference type="GO" id="GO:0008270">
    <property type="term" value="F:zinc ion binding"/>
    <property type="evidence" value="ECO:0007669"/>
    <property type="project" value="UniProtKB-UniRule"/>
</dbReference>
<dbReference type="GO" id="GO:0006351">
    <property type="term" value="P:DNA-templated transcription"/>
    <property type="evidence" value="ECO:0007669"/>
    <property type="project" value="UniProtKB-UniRule"/>
</dbReference>
<dbReference type="CDD" id="cd02655">
    <property type="entry name" value="RNAP_beta'_C"/>
    <property type="match status" value="1"/>
</dbReference>
<dbReference type="FunFam" id="1.10.150.390:FF:000002">
    <property type="entry name" value="DNA-directed RNA polymerase subunit beta"/>
    <property type="match status" value="1"/>
</dbReference>
<dbReference type="Gene3D" id="1.10.132.30">
    <property type="match status" value="1"/>
</dbReference>
<dbReference type="Gene3D" id="1.10.150.390">
    <property type="match status" value="1"/>
</dbReference>
<dbReference type="Gene3D" id="1.10.1790.20">
    <property type="match status" value="1"/>
</dbReference>
<dbReference type="Gene3D" id="2.40.50.100">
    <property type="match status" value="2"/>
</dbReference>
<dbReference type="Gene3D" id="1.10.274.100">
    <property type="entry name" value="RNA polymerase Rpb1, domain 3"/>
    <property type="match status" value="1"/>
</dbReference>
<dbReference type="HAMAP" id="MF_01324">
    <property type="entry name" value="RNApol_bact_RpoC2"/>
    <property type="match status" value="1"/>
</dbReference>
<dbReference type="InterPro" id="IPR012756">
    <property type="entry name" value="DNA-dir_RpoC2_beta_pp"/>
</dbReference>
<dbReference type="InterPro" id="IPR045867">
    <property type="entry name" value="DNA-dir_RpoC_beta_prime"/>
</dbReference>
<dbReference type="InterPro" id="IPR007066">
    <property type="entry name" value="RNA_pol_Rpb1_3"/>
</dbReference>
<dbReference type="InterPro" id="IPR042102">
    <property type="entry name" value="RNA_pol_Rpb1_3_sf"/>
</dbReference>
<dbReference type="InterPro" id="IPR007083">
    <property type="entry name" value="RNA_pol_Rpb1_4"/>
</dbReference>
<dbReference type="InterPro" id="IPR007081">
    <property type="entry name" value="RNA_pol_Rpb1_5"/>
</dbReference>
<dbReference type="InterPro" id="IPR038120">
    <property type="entry name" value="Rpb1_funnel_sf"/>
</dbReference>
<dbReference type="NCBIfam" id="NF002724">
    <property type="entry name" value="PRK02597.1"/>
    <property type="match status" value="1"/>
</dbReference>
<dbReference type="NCBIfam" id="TIGR02388">
    <property type="entry name" value="rpoC2_cyan"/>
    <property type="match status" value="2"/>
</dbReference>
<dbReference type="PANTHER" id="PTHR19376">
    <property type="entry name" value="DNA-DIRECTED RNA POLYMERASE"/>
    <property type="match status" value="1"/>
</dbReference>
<dbReference type="PANTHER" id="PTHR19376:SF68">
    <property type="entry name" value="DNA-DIRECTED RNA POLYMERASE SUBUNIT BETA"/>
    <property type="match status" value="1"/>
</dbReference>
<dbReference type="Pfam" id="PF04983">
    <property type="entry name" value="RNA_pol_Rpb1_3"/>
    <property type="match status" value="1"/>
</dbReference>
<dbReference type="Pfam" id="PF05000">
    <property type="entry name" value="RNA_pol_Rpb1_4"/>
    <property type="match status" value="1"/>
</dbReference>
<dbReference type="Pfam" id="PF04998">
    <property type="entry name" value="RNA_pol_Rpb1_5"/>
    <property type="match status" value="1"/>
</dbReference>
<dbReference type="SUPFAM" id="SSF64484">
    <property type="entry name" value="beta and beta-prime subunits of DNA dependent RNA-polymerase"/>
    <property type="match status" value="1"/>
</dbReference>
<gene>
    <name evidence="1" type="primary">rpoC2</name>
    <name type="ordered locus">Tery_2937</name>
</gene>
<organism>
    <name type="scientific">Trichodesmium erythraeum (strain IMS101)</name>
    <dbReference type="NCBI Taxonomy" id="203124"/>
    <lineage>
        <taxon>Bacteria</taxon>
        <taxon>Bacillati</taxon>
        <taxon>Cyanobacteriota</taxon>
        <taxon>Cyanophyceae</taxon>
        <taxon>Oscillatoriophycideae</taxon>
        <taxon>Oscillatoriales</taxon>
        <taxon>Microcoleaceae</taxon>
        <taxon>Trichodesmium</taxon>
    </lineage>
</organism>